<keyword id="KW-0012">Acyltransferase</keyword>
<keyword id="KW-0963">Cytoplasm</keyword>
<keyword id="KW-0275">Fatty acid biosynthesis</keyword>
<keyword id="KW-0276">Fatty acid metabolism</keyword>
<keyword id="KW-0444">Lipid biosynthesis</keyword>
<keyword id="KW-0443">Lipid metabolism</keyword>
<keyword id="KW-0511">Multifunctional enzyme</keyword>
<keyword id="KW-0808">Transferase</keyword>
<evidence type="ECO:0000255" key="1">
    <source>
        <dbReference type="HAMAP-Rule" id="MF_01815"/>
    </source>
</evidence>
<name>FABH_MYCBT</name>
<protein>
    <recommendedName>
        <fullName evidence="1">Mycobacterial beta-ketoacyl-[acyl-carrier-protein] synthase III</fullName>
        <shortName evidence="1">Beta-ketoacyl-ACP synthase III</shortName>
        <shortName evidence="1">KAS III</shortName>
        <ecNumber evidence="1">2.3.1.301</ecNumber>
    </recommendedName>
    <alternativeName>
        <fullName evidence="1">3-oxoacyl-[acyl-carrier-protein] synthase 3</fullName>
    </alternativeName>
    <alternativeName>
        <fullName evidence="1">3-oxoacyl-[acyl-carrier-protein] synthase III</fullName>
    </alternativeName>
</protein>
<reference key="1">
    <citation type="journal article" date="2009" name="Vaccine">
        <title>Whole genome sequence analysis of Mycobacterium bovis bacillus Calmette-Guerin (BCG) Tokyo 172: a comparative study of BCG vaccine substrains.</title>
        <authorList>
            <person name="Seki M."/>
            <person name="Honda I."/>
            <person name="Fujita I."/>
            <person name="Yano I."/>
            <person name="Yamamoto S."/>
            <person name="Koyama A."/>
        </authorList>
    </citation>
    <scope>NUCLEOTIDE SEQUENCE [LARGE SCALE GENOMIC DNA]</scope>
    <source>
        <strain>BCG / Tokyo 172 / ATCC 35737 / TMC 1019</strain>
    </source>
</reference>
<comment type="function">
    <text evidence="1">Catalyzes the condensation reaction of fatty acid synthesis by the addition to an acyl acceptor of two carbons from malonyl-ACP. Catalyzes the first condensation reaction which initiates fatty acid synthesis and may therefore play a role in governing the total rate of fatty acid production. Possesses both acetoacetyl-ACP synthase and acetyl transacylase activities. Its substrate specificity determines the biosynthesis of branched-chain and/or straight-chain of fatty acids.</text>
</comment>
<comment type="catalytic activity">
    <reaction evidence="1">
        <text>malonyl-[ACP] + dodecanoyl-CoA + H(+) = 3-oxotetradecanoyl-[ACP] + CO2 + CoA</text>
        <dbReference type="Rhea" id="RHEA:43640"/>
        <dbReference type="Rhea" id="RHEA-COMP:9623"/>
        <dbReference type="Rhea" id="RHEA-COMP:9645"/>
        <dbReference type="ChEBI" id="CHEBI:15378"/>
        <dbReference type="ChEBI" id="CHEBI:16526"/>
        <dbReference type="ChEBI" id="CHEBI:57287"/>
        <dbReference type="ChEBI" id="CHEBI:57375"/>
        <dbReference type="ChEBI" id="CHEBI:78449"/>
        <dbReference type="ChEBI" id="CHEBI:78473"/>
        <dbReference type="EC" id="2.3.1.301"/>
    </reaction>
    <physiologicalReaction direction="left-to-right" evidence="1">
        <dbReference type="Rhea" id="RHEA:43641"/>
    </physiologicalReaction>
</comment>
<comment type="pathway">
    <text evidence="1">Lipid metabolism; fatty acid biosynthesis.</text>
</comment>
<comment type="pathway">
    <text evidence="1">Lipid metabolism; mycolic acid biosynthesis.</text>
</comment>
<comment type="subunit">
    <text evidence="1">Homodimer.</text>
</comment>
<comment type="subcellular location">
    <subcellularLocation>
        <location evidence="1">Cytoplasm</location>
    </subcellularLocation>
</comment>
<comment type="domain">
    <text evidence="1">The last Arg residue of the ACP-binding site is essential for the weak association between ACP/AcpP and FabH.</text>
</comment>
<comment type="similarity">
    <text evidence="1">Belongs to the thiolase-like superfamily. FabH family.</text>
</comment>
<proteinExistence type="inferred from homology"/>
<sequence length="335" mass="34873">MTEIATTSGARSVGLLSVGAYRPERVVTNDEICQHIDSSDEWIYTRTGIKTRRFAADDESAASMATEACRRALSNAGLSAADIDGVIVTTNTHFLQTPPAAPMVAASLGAKGILGFDLSAGCAGFGYALGAAADMIRGGGAATMLVVGTEKLSPTIDMYDRGNCFIFADGAAAVVVGETPFQGIGPTVAGSDGEQADAIRQDIDWITFAQNPSGPRPFVRLEGPAVFRWAAFKMGDVGRRAMDAAGVRPDQIDVFVPHQANSRINELLVKNLQLRPDAVVANDIEHTGNTSAASIPLAMAELLTTGAAKPGDLALLIGYGAGLSYAAQVVRMPKG</sequence>
<organism>
    <name type="scientific">Mycobacterium bovis (strain BCG / Tokyo 172 / ATCC 35737 / TMC 1019)</name>
    <dbReference type="NCBI Taxonomy" id="561275"/>
    <lineage>
        <taxon>Bacteria</taxon>
        <taxon>Bacillati</taxon>
        <taxon>Actinomycetota</taxon>
        <taxon>Actinomycetes</taxon>
        <taxon>Mycobacteriales</taxon>
        <taxon>Mycobacteriaceae</taxon>
        <taxon>Mycobacterium</taxon>
        <taxon>Mycobacterium tuberculosis complex</taxon>
    </lineage>
</organism>
<gene>
    <name evidence="1" type="primary">fabH</name>
    <name type="ordered locus">JTY_0547</name>
</gene>
<accession>C1AKL3</accession>
<dbReference type="EC" id="2.3.1.301" evidence="1"/>
<dbReference type="EMBL" id="AP010918">
    <property type="protein sequence ID" value="BAH24842.1"/>
    <property type="molecule type" value="Genomic_DNA"/>
</dbReference>
<dbReference type="RefSeq" id="WP_003402861.1">
    <property type="nucleotide sequence ID" value="NZ_CP014566.1"/>
</dbReference>
<dbReference type="SMR" id="C1AKL3"/>
<dbReference type="GeneID" id="45424497"/>
<dbReference type="KEGG" id="mbt:JTY_0547"/>
<dbReference type="HOGENOM" id="CLU_039592_4_0_11"/>
<dbReference type="UniPathway" id="UPA00094"/>
<dbReference type="UniPathway" id="UPA00915"/>
<dbReference type="GO" id="GO:0005737">
    <property type="term" value="C:cytoplasm"/>
    <property type="evidence" value="ECO:0007669"/>
    <property type="project" value="UniProtKB-SubCell"/>
</dbReference>
<dbReference type="GO" id="GO:0004315">
    <property type="term" value="F:3-oxoacyl-[acyl-carrier-protein] synthase activity"/>
    <property type="evidence" value="ECO:0007669"/>
    <property type="project" value="InterPro"/>
</dbReference>
<dbReference type="GO" id="GO:0033818">
    <property type="term" value="F:beta-ketoacyl-acyl-carrier-protein synthase III activity"/>
    <property type="evidence" value="ECO:0007669"/>
    <property type="project" value="UniProtKB-UniRule"/>
</dbReference>
<dbReference type="GO" id="GO:0006633">
    <property type="term" value="P:fatty acid biosynthetic process"/>
    <property type="evidence" value="ECO:0007669"/>
    <property type="project" value="UniProtKB-UniRule"/>
</dbReference>
<dbReference type="CDD" id="cd00830">
    <property type="entry name" value="KAS_III"/>
    <property type="match status" value="1"/>
</dbReference>
<dbReference type="FunFam" id="3.40.47.10:FF:000071">
    <property type="entry name" value="3-oxoacyl-[acyl-carrier-protein] synthase 3"/>
    <property type="match status" value="1"/>
</dbReference>
<dbReference type="FunFam" id="3.40.47.10:FF:000076">
    <property type="entry name" value="3-oxoacyl-[acyl-carrier-protein] synthase 3"/>
    <property type="match status" value="1"/>
</dbReference>
<dbReference type="Gene3D" id="3.40.47.10">
    <property type="match status" value="2"/>
</dbReference>
<dbReference type="HAMAP" id="MF_01815">
    <property type="entry name" value="FabH"/>
    <property type="match status" value="1"/>
</dbReference>
<dbReference type="InterPro" id="IPR013747">
    <property type="entry name" value="ACP_syn_III_C"/>
</dbReference>
<dbReference type="InterPro" id="IPR013751">
    <property type="entry name" value="ACP_syn_III_N"/>
</dbReference>
<dbReference type="InterPro" id="IPR004655">
    <property type="entry name" value="FabH"/>
</dbReference>
<dbReference type="InterPro" id="IPR016039">
    <property type="entry name" value="Thiolase-like"/>
</dbReference>
<dbReference type="NCBIfam" id="TIGR00747">
    <property type="entry name" value="fabH"/>
    <property type="match status" value="1"/>
</dbReference>
<dbReference type="NCBIfam" id="NF006829">
    <property type="entry name" value="PRK09352.1"/>
    <property type="match status" value="1"/>
</dbReference>
<dbReference type="PANTHER" id="PTHR43091">
    <property type="entry name" value="3-OXOACYL-[ACYL-CARRIER-PROTEIN] SYNTHASE"/>
    <property type="match status" value="1"/>
</dbReference>
<dbReference type="PANTHER" id="PTHR43091:SF1">
    <property type="entry name" value="BETA-KETOACYL-[ACYL-CARRIER-PROTEIN] SYNTHASE III, CHLOROPLASTIC"/>
    <property type="match status" value="1"/>
</dbReference>
<dbReference type="Pfam" id="PF08545">
    <property type="entry name" value="ACP_syn_III"/>
    <property type="match status" value="1"/>
</dbReference>
<dbReference type="Pfam" id="PF08541">
    <property type="entry name" value="ACP_syn_III_C"/>
    <property type="match status" value="1"/>
</dbReference>
<dbReference type="SUPFAM" id="SSF53901">
    <property type="entry name" value="Thiolase-like"/>
    <property type="match status" value="1"/>
</dbReference>
<feature type="chain" id="PRO_1000187879" description="Mycobacterial beta-ketoacyl-[acyl-carrier-protein] synthase III">
    <location>
        <begin position="1"/>
        <end position="335"/>
    </location>
</feature>
<feature type="region of interest" description="ACP-binding" evidence="1">
    <location>
        <begin position="259"/>
        <end position="263"/>
    </location>
</feature>
<feature type="active site" evidence="1">
    <location>
        <position position="122"/>
    </location>
</feature>
<feature type="active site" evidence="1">
    <location>
        <position position="258"/>
    </location>
</feature>
<feature type="active site" evidence="1">
    <location>
        <position position="289"/>
    </location>
</feature>